<gene>
    <name type="ordered locus">Cj0270</name>
</gene>
<name>Y270_CAMJE</name>
<comment type="similarity">
    <text evidence="2">Belongs to the 4-oxalocrotonate tautomerase family.</text>
</comment>
<organism>
    <name type="scientific">Campylobacter jejuni subsp. jejuni serotype O:2 (strain ATCC 700819 / NCTC 11168)</name>
    <dbReference type="NCBI Taxonomy" id="192222"/>
    <lineage>
        <taxon>Bacteria</taxon>
        <taxon>Pseudomonadati</taxon>
        <taxon>Campylobacterota</taxon>
        <taxon>Epsilonproteobacteria</taxon>
        <taxon>Campylobacterales</taxon>
        <taxon>Campylobacteraceae</taxon>
        <taxon>Campylobacter</taxon>
    </lineage>
</organism>
<dbReference type="EC" id="5.3.2.-"/>
<dbReference type="EMBL" id="AL111168">
    <property type="protein sequence ID" value="CAL34424.1"/>
    <property type="molecule type" value="Genomic_DNA"/>
</dbReference>
<dbReference type="PIR" id="E81445">
    <property type="entry name" value="E81445"/>
</dbReference>
<dbReference type="RefSeq" id="WP_002851942.1">
    <property type="nucleotide sequence ID" value="NZ_SZUC01000004.1"/>
</dbReference>
<dbReference type="RefSeq" id="YP_002343712.1">
    <property type="nucleotide sequence ID" value="NC_002163.1"/>
</dbReference>
<dbReference type="SMR" id="Q9PIM5"/>
<dbReference type="IntAct" id="Q9PIM5">
    <property type="interactions" value="84"/>
</dbReference>
<dbReference type="STRING" id="192222.Cj0270"/>
<dbReference type="PaxDb" id="192222-Cj0270"/>
<dbReference type="EnsemblBacteria" id="CAL34424">
    <property type="protein sequence ID" value="CAL34424"/>
    <property type="gene ID" value="Cj0270"/>
</dbReference>
<dbReference type="GeneID" id="904595"/>
<dbReference type="KEGG" id="cje:Cj0270"/>
<dbReference type="PATRIC" id="fig|192222.6.peg.264"/>
<dbReference type="eggNOG" id="COG1942">
    <property type="taxonomic scope" value="Bacteria"/>
</dbReference>
<dbReference type="HOGENOM" id="CLU_148073_1_2_7"/>
<dbReference type="OrthoDB" id="5357579at2"/>
<dbReference type="Proteomes" id="UP000000799">
    <property type="component" value="Chromosome"/>
</dbReference>
<dbReference type="GO" id="GO:0016853">
    <property type="term" value="F:isomerase activity"/>
    <property type="evidence" value="ECO:0007669"/>
    <property type="project" value="UniProtKB-KW"/>
</dbReference>
<dbReference type="Gene3D" id="3.30.429.10">
    <property type="entry name" value="Macrophage Migration Inhibitory Factor"/>
    <property type="match status" value="1"/>
</dbReference>
<dbReference type="InterPro" id="IPR004370">
    <property type="entry name" value="4-OT-like_dom"/>
</dbReference>
<dbReference type="InterPro" id="IPR014347">
    <property type="entry name" value="Tautomerase/MIF_sf"/>
</dbReference>
<dbReference type="PANTHER" id="PTHR35530:SF1">
    <property type="entry name" value="2-HYDROXYMUCONATE TAUTOMERASE"/>
    <property type="match status" value="1"/>
</dbReference>
<dbReference type="PANTHER" id="PTHR35530">
    <property type="entry name" value="TAUTOMERASE-RELATED"/>
    <property type="match status" value="1"/>
</dbReference>
<dbReference type="Pfam" id="PF01361">
    <property type="entry name" value="Tautomerase"/>
    <property type="match status" value="1"/>
</dbReference>
<dbReference type="SUPFAM" id="SSF55331">
    <property type="entry name" value="Tautomerase/MIF"/>
    <property type="match status" value="1"/>
</dbReference>
<accession>Q9PIM5</accession>
<accession>Q0PBN5</accession>
<reference key="1">
    <citation type="journal article" date="2000" name="Nature">
        <title>The genome sequence of the food-borne pathogen Campylobacter jejuni reveals hypervariable sequences.</title>
        <authorList>
            <person name="Parkhill J."/>
            <person name="Wren B.W."/>
            <person name="Mungall K.L."/>
            <person name="Ketley J.M."/>
            <person name="Churcher C.M."/>
            <person name="Basham D."/>
            <person name="Chillingworth T."/>
            <person name="Davies R.M."/>
            <person name="Feltwell T."/>
            <person name="Holroyd S."/>
            <person name="Jagels K."/>
            <person name="Karlyshev A.V."/>
            <person name="Moule S."/>
            <person name="Pallen M.J."/>
            <person name="Penn C.W."/>
            <person name="Quail M.A."/>
            <person name="Rajandream M.A."/>
            <person name="Rutherford K.M."/>
            <person name="van Vliet A.H.M."/>
            <person name="Whitehead S."/>
            <person name="Barrell B.G."/>
        </authorList>
    </citation>
    <scope>NUCLEOTIDE SEQUENCE [LARGE SCALE GENOMIC DNA]</scope>
    <source>
        <strain>ATCC 700819 / NCTC 11168</strain>
    </source>
</reference>
<keyword id="KW-0413">Isomerase</keyword>
<keyword id="KW-1185">Reference proteome</keyword>
<evidence type="ECO:0000250" key="1"/>
<evidence type="ECO:0000305" key="2"/>
<feature type="initiator methionine" description="Removed" evidence="1">
    <location>
        <position position="1"/>
    </location>
</feature>
<feature type="chain" id="PRO_0000209525" description="Probable tautomerase Cj0270">
    <location>
        <begin position="2"/>
        <end position="68"/>
    </location>
</feature>
<feature type="active site" description="Proton acceptor; via imino nitrogen" evidence="1">
    <location>
        <position position="2"/>
    </location>
</feature>
<proteinExistence type="inferred from homology"/>
<protein>
    <recommendedName>
        <fullName>Probable tautomerase Cj0270</fullName>
        <ecNumber>5.3.2.-</ecNumber>
    </recommendedName>
</protein>
<sequence>MPLVNIKLAKPSLSKEQKAELIADITELLSTKYNKSKERVVVVLEDVENYDIGFGGESVEAIKAKASK</sequence>